<gene>
    <name evidence="1" type="primary">RIR2</name>
    <name type="synonym">60</name>
    <name type="synonym">EELF3</name>
</gene>
<evidence type="ECO:0000255" key="1">
    <source>
        <dbReference type="HAMAP-Rule" id="MF_04028"/>
    </source>
</evidence>
<proteinExistence type="inferred from homology"/>
<accession>Q01038</accession>
<sequence length="305" mass="35167">MDSVKKYLYTCDHVGFLELTKETWKNRWFPSQVPLQGDVCCVDMLNERDLEFYKFLFTFLGMAEKLVNINIEDLLSQFDSHDISHYYAEQMAMENIHGKVYANILNMLFKNNITEVYSYACDIMNDSALQEKLRWLNGRVTEASDKAEKILLFLLVEGIFFISSFFSIGLFRVRGIMNGICLANDYIARDEMLHTSAAALLYNTMTKSSERPSEDWIYKLFREAVEVEFKFIAAKGYGVSLVNVHEIRQFLQATADRILESINLNPIYGSLPPENCPLAYTSSTKSVNFFERDNSDYTGTLTNDL</sequence>
<name>RIR2_SHV21</name>
<organismHost>
    <name type="scientific">Saimiri sciureus</name>
    <name type="common">Common squirrel monkey</name>
    <dbReference type="NCBI Taxonomy" id="9521"/>
</organismHost>
<feature type="chain" id="PRO_0000190510" description="Ribonucleoside-diphosphate reductase small subunit">
    <location>
        <begin position="1"/>
        <end position="305"/>
    </location>
</feature>
<feature type="transmembrane region" description="Helical" evidence="1">
    <location>
        <begin position="150"/>
        <end position="170"/>
    </location>
</feature>
<feature type="active site" evidence="1">
    <location>
        <position position="101"/>
    </location>
</feature>
<feature type="binding site" evidence="1">
    <location>
        <position position="64"/>
    </location>
    <ligand>
        <name>Fe cation</name>
        <dbReference type="ChEBI" id="CHEBI:24875"/>
        <label>1</label>
    </ligand>
</feature>
<feature type="binding site" evidence="1">
    <location>
        <position position="94"/>
    </location>
    <ligand>
        <name>Fe cation</name>
        <dbReference type="ChEBI" id="CHEBI:24875"/>
        <label>1</label>
    </ligand>
</feature>
<feature type="binding site" evidence="1">
    <location>
        <position position="94"/>
    </location>
    <ligand>
        <name>Fe cation</name>
        <dbReference type="ChEBI" id="CHEBI:24875"/>
        <label>2</label>
    </ligand>
</feature>
<feature type="binding site" evidence="1">
    <location>
        <position position="97"/>
    </location>
    <ligand>
        <name>Fe cation</name>
        <dbReference type="ChEBI" id="CHEBI:24875"/>
        <label>1</label>
    </ligand>
</feature>
<feature type="binding site" evidence="1">
    <location>
        <position position="157"/>
    </location>
    <ligand>
        <name>Fe cation</name>
        <dbReference type="ChEBI" id="CHEBI:24875"/>
        <label>2</label>
    </ligand>
</feature>
<feature type="binding site" evidence="1">
    <location>
        <position position="191"/>
    </location>
    <ligand>
        <name>Fe cation</name>
        <dbReference type="ChEBI" id="CHEBI:24875"/>
        <label>2</label>
    </ligand>
</feature>
<feature type="binding site" evidence="1">
    <location>
        <position position="194"/>
    </location>
    <ligand>
        <name>Fe cation</name>
        <dbReference type="ChEBI" id="CHEBI:24875"/>
        <label>2</label>
    </ligand>
</feature>
<reference key="1">
    <citation type="journal article" date="1992" name="J. Virol.">
        <title>Primary structure of the herpesvirus saimiri genome.</title>
        <authorList>
            <person name="Albrecht J.-C."/>
            <person name="Nicholas J."/>
            <person name="Biller D."/>
            <person name="Cameron K.R."/>
            <person name="Biesinger B."/>
            <person name="Newman C."/>
            <person name="Wittmann S."/>
            <person name="Craxton M.A."/>
            <person name="Coleman H."/>
            <person name="Fleckenstein B."/>
            <person name="Honess R.W."/>
        </authorList>
    </citation>
    <scope>NUCLEOTIDE SEQUENCE [LARGE SCALE GENOMIC DNA]</scope>
</reference>
<reference key="2">
    <citation type="journal article" date="1992" name="Virology">
        <title>Analysis of nucleotide sequence of the rightmost 43 kbp of herpesvirus saimiri (HVS) L-DNA: general conservation of genetic organization between HVS and Epstein-Barr virus.</title>
        <authorList>
            <person name="Nicholas J."/>
            <person name="Cameron K.R."/>
            <person name="Coleman H."/>
            <person name="Newman C."/>
            <person name="Honess R.W."/>
        </authorList>
    </citation>
    <scope>NUCLEOTIDE SEQUENCE [GENOMIC DNA]</scope>
</reference>
<reference key="3">
    <citation type="journal article" date="2009" name="Trends Biochem. Sci.">
        <title>Tinkering with a viral ribonucleotide reductase.</title>
        <authorList>
            <person name="Lembo D."/>
            <person name="Brune W."/>
        </authorList>
    </citation>
    <scope>REVIEW</scope>
</reference>
<comment type="function">
    <text evidence="1">Ribonucleoside-diphosphate reductase holoenzyme provides the precursors necessary for viral DNA synthesis. Allows virus growth in non-dividing cells, as well as reactivation from latency in infected hosts. Catalyzes the biosynthesis of deoxyribonucleotides from the corresponding ribonucleotides.</text>
</comment>
<comment type="catalytic activity">
    <reaction evidence="1">
        <text>a 2'-deoxyribonucleoside 5'-diphosphate + [thioredoxin]-disulfide + H2O = a ribonucleoside 5'-diphosphate + [thioredoxin]-dithiol</text>
        <dbReference type="Rhea" id="RHEA:23252"/>
        <dbReference type="Rhea" id="RHEA-COMP:10698"/>
        <dbReference type="Rhea" id="RHEA-COMP:10700"/>
        <dbReference type="ChEBI" id="CHEBI:15377"/>
        <dbReference type="ChEBI" id="CHEBI:29950"/>
        <dbReference type="ChEBI" id="CHEBI:50058"/>
        <dbReference type="ChEBI" id="CHEBI:57930"/>
        <dbReference type="ChEBI" id="CHEBI:73316"/>
        <dbReference type="EC" id="1.17.4.1"/>
    </reaction>
</comment>
<comment type="cofactor">
    <cofactor evidence="1">
        <name>Fe cation</name>
        <dbReference type="ChEBI" id="CHEBI:24875"/>
    </cofactor>
</comment>
<comment type="subunit">
    <text evidence="1">Heterotetramer composed of a homodimer of the large subunit (R1) and a homodimer of the small subunit (R2). Larger multisubunit protein complex are also active, composed of (R1)n(R2)n.</text>
</comment>
<comment type="subcellular location">
    <subcellularLocation>
        <location evidence="1">Host membrane</location>
        <topology evidence="1">Single-pass membrane protein</topology>
    </subcellularLocation>
</comment>
<comment type="similarity">
    <text evidence="1">Belongs to the ribonucleoside diphosphate reductase small chain family.</text>
</comment>
<dbReference type="EC" id="1.17.4.1" evidence="1"/>
<dbReference type="EMBL" id="X64346">
    <property type="protein sequence ID" value="CAA45683.1"/>
    <property type="molecule type" value="Genomic_DNA"/>
</dbReference>
<dbReference type="EMBL" id="M86409">
    <property type="protein sequence ID" value="AAA46136.1"/>
    <property type="molecule type" value="Genomic_DNA"/>
</dbReference>
<dbReference type="RefSeq" id="NP_040262.1">
    <property type="nucleotide sequence ID" value="NC_001350.1"/>
</dbReference>
<dbReference type="SMR" id="Q01038"/>
<dbReference type="KEGG" id="vg:1682509"/>
<dbReference type="Proteomes" id="UP000000587">
    <property type="component" value="Segment"/>
</dbReference>
<dbReference type="GO" id="GO:0033644">
    <property type="term" value="C:host cell membrane"/>
    <property type="evidence" value="ECO:0007669"/>
    <property type="project" value="UniProtKB-SubCell"/>
</dbReference>
<dbReference type="GO" id="GO:0016020">
    <property type="term" value="C:membrane"/>
    <property type="evidence" value="ECO:0007669"/>
    <property type="project" value="UniProtKB-KW"/>
</dbReference>
<dbReference type="GO" id="GO:0046872">
    <property type="term" value="F:metal ion binding"/>
    <property type="evidence" value="ECO:0007669"/>
    <property type="project" value="UniProtKB-KW"/>
</dbReference>
<dbReference type="GO" id="GO:0004748">
    <property type="term" value="F:ribonucleoside-diphosphate reductase activity, thioredoxin disulfide as acceptor"/>
    <property type="evidence" value="ECO:0007669"/>
    <property type="project" value="UniProtKB-EC"/>
</dbReference>
<dbReference type="GO" id="GO:0009263">
    <property type="term" value="P:deoxyribonucleotide biosynthetic process"/>
    <property type="evidence" value="ECO:0007669"/>
    <property type="project" value="InterPro"/>
</dbReference>
<dbReference type="GO" id="GO:0006260">
    <property type="term" value="P:DNA replication"/>
    <property type="evidence" value="ECO:0007669"/>
    <property type="project" value="UniProtKB-KW"/>
</dbReference>
<dbReference type="CDD" id="cd01049">
    <property type="entry name" value="RNRR2"/>
    <property type="match status" value="1"/>
</dbReference>
<dbReference type="Gene3D" id="1.10.620.20">
    <property type="entry name" value="Ribonucleotide Reductase, subunit A"/>
    <property type="match status" value="1"/>
</dbReference>
<dbReference type="HAMAP" id="MF_04028">
    <property type="entry name" value="HSV_RIR2"/>
    <property type="match status" value="1"/>
</dbReference>
<dbReference type="InterPro" id="IPR009078">
    <property type="entry name" value="Ferritin-like_SF"/>
</dbReference>
<dbReference type="InterPro" id="IPR034715">
    <property type="entry name" value="HSV_RIR2"/>
</dbReference>
<dbReference type="InterPro" id="IPR012348">
    <property type="entry name" value="RNR-like"/>
</dbReference>
<dbReference type="InterPro" id="IPR033909">
    <property type="entry name" value="RNR_small"/>
</dbReference>
<dbReference type="InterPro" id="IPR030475">
    <property type="entry name" value="RNR_small_AS"/>
</dbReference>
<dbReference type="InterPro" id="IPR000358">
    <property type="entry name" value="RNR_small_fam"/>
</dbReference>
<dbReference type="PANTHER" id="PTHR23409">
    <property type="entry name" value="RIBONUCLEOSIDE-DIPHOSPHATE REDUCTASE SMALL CHAIN"/>
    <property type="match status" value="1"/>
</dbReference>
<dbReference type="PANTHER" id="PTHR23409:SF18">
    <property type="entry name" value="RIBONUCLEOSIDE-DIPHOSPHATE REDUCTASE SUBUNIT M2"/>
    <property type="match status" value="1"/>
</dbReference>
<dbReference type="Pfam" id="PF00268">
    <property type="entry name" value="Ribonuc_red_sm"/>
    <property type="match status" value="1"/>
</dbReference>
<dbReference type="SUPFAM" id="SSF47240">
    <property type="entry name" value="Ferritin-like"/>
    <property type="match status" value="1"/>
</dbReference>
<dbReference type="PROSITE" id="PS00368">
    <property type="entry name" value="RIBORED_SMALL"/>
    <property type="match status" value="1"/>
</dbReference>
<organism>
    <name type="scientific">Saimiriine herpesvirus 2 (strain 11)</name>
    <name type="common">SaHV-2</name>
    <name type="synonym">Herpesvirus saimiri</name>
    <dbReference type="NCBI Taxonomy" id="10383"/>
    <lineage>
        <taxon>Viruses</taxon>
        <taxon>Duplodnaviria</taxon>
        <taxon>Heunggongvirae</taxon>
        <taxon>Peploviricota</taxon>
        <taxon>Herviviricetes</taxon>
        <taxon>Herpesvirales</taxon>
        <taxon>Orthoherpesviridae</taxon>
        <taxon>Gammaherpesvirinae</taxon>
        <taxon>Rhadinovirus</taxon>
        <taxon>Rhadinovirus saimiriinegamma2</taxon>
        <taxon>Saimiriine herpesvirus 2</taxon>
    </lineage>
</organism>
<keyword id="KW-0235">DNA replication</keyword>
<keyword id="KW-1043">Host membrane</keyword>
<keyword id="KW-0408">Iron</keyword>
<keyword id="KW-0472">Membrane</keyword>
<keyword id="KW-0479">Metal-binding</keyword>
<keyword id="KW-0560">Oxidoreductase</keyword>
<keyword id="KW-1185">Reference proteome</keyword>
<keyword id="KW-0812">Transmembrane</keyword>
<keyword id="KW-1133">Transmembrane helix</keyword>
<protein>
    <recommendedName>
        <fullName evidence="1">Ribonucleoside-diphosphate reductase small subunit</fullName>
        <ecNumber evidence="1">1.17.4.1</ecNumber>
    </recommendedName>
    <alternativeName>
        <fullName evidence="1">Ribonucleotide reductase small subunit</fullName>
    </alternativeName>
</protein>